<protein>
    <recommendedName>
        <fullName>Homeobox protein Hox-D4</fullName>
    </recommendedName>
</protein>
<comment type="function">
    <text evidence="1">Sequence-specific transcription factor which is part of a developmental regulatory system that provides cells with specific positional identities on the anterior-posterior axis.</text>
</comment>
<comment type="subunit">
    <text evidence="2">Forms a DNA-binding heterodimer with transcription factor PBX1.</text>
</comment>
<comment type="subcellular location">
    <subcellularLocation>
        <location evidence="3">Nucleus</location>
    </subcellularLocation>
</comment>
<comment type="similarity">
    <text evidence="5">Belongs to the Antp homeobox family. Deformed subfamily.</text>
</comment>
<name>HXD4_PANTR</name>
<accession>A2T6X6</accession>
<organism>
    <name type="scientific">Pan troglodytes</name>
    <name type="common">Chimpanzee</name>
    <dbReference type="NCBI Taxonomy" id="9598"/>
    <lineage>
        <taxon>Eukaryota</taxon>
        <taxon>Metazoa</taxon>
        <taxon>Chordata</taxon>
        <taxon>Craniata</taxon>
        <taxon>Vertebrata</taxon>
        <taxon>Euteleostomi</taxon>
        <taxon>Mammalia</taxon>
        <taxon>Eutheria</taxon>
        <taxon>Euarchontoglires</taxon>
        <taxon>Primates</taxon>
        <taxon>Haplorrhini</taxon>
        <taxon>Catarrhini</taxon>
        <taxon>Hominidae</taxon>
        <taxon>Pan</taxon>
    </lineage>
</organism>
<keyword id="KW-0217">Developmental protein</keyword>
<keyword id="KW-0238">DNA-binding</keyword>
<keyword id="KW-0371">Homeobox</keyword>
<keyword id="KW-0539">Nucleus</keyword>
<keyword id="KW-1185">Reference proteome</keyword>
<keyword id="KW-0804">Transcription</keyword>
<keyword id="KW-0805">Transcription regulation</keyword>
<proteinExistence type="inferred from homology"/>
<dbReference type="EMBL" id="DQ977326">
    <property type="protein sequence ID" value="ABM91931.1"/>
    <property type="molecule type" value="Genomic_DNA"/>
</dbReference>
<dbReference type="RefSeq" id="NP_001075038.1">
    <property type="nucleotide sequence ID" value="NM_001081569.1"/>
</dbReference>
<dbReference type="RefSeq" id="XP_016804855.1">
    <property type="nucleotide sequence ID" value="XM_016949366.3"/>
</dbReference>
<dbReference type="RefSeq" id="XP_016804856.1">
    <property type="nucleotide sequence ID" value="XM_016949367.1"/>
</dbReference>
<dbReference type="SMR" id="A2T6X6"/>
<dbReference type="FunCoup" id="A2T6X6">
    <property type="interactions" value="418"/>
</dbReference>
<dbReference type="STRING" id="9598.ENSPTRP00000089314"/>
<dbReference type="PaxDb" id="9598-ENSPTRP00000021650"/>
<dbReference type="Ensembl" id="ENSPTRT00000110047.1">
    <property type="protein sequence ID" value="ENSPTRP00000089314.1"/>
    <property type="gene ID" value="ENSPTRG00000051862.1"/>
</dbReference>
<dbReference type="GeneID" id="739805"/>
<dbReference type="KEGG" id="ptr:739805"/>
<dbReference type="CTD" id="3233"/>
<dbReference type="VGNC" id="VGNC:1966">
    <property type="gene designation" value="HOXD4"/>
</dbReference>
<dbReference type="eggNOG" id="KOG0489">
    <property type="taxonomic scope" value="Eukaryota"/>
</dbReference>
<dbReference type="GeneTree" id="ENSGT00940000157270"/>
<dbReference type="HOGENOM" id="CLU_061398_0_0_1"/>
<dbReference type="InParanoid" id="A2T6X6"/>
<dbReference type="OMA" id="PGQGEHC"/>
<dbReference type="OrthoDB" id="15585at9604"/>
<dbReference type="TreeFam" id="TF352857"/>
<dbReference type="Proteomes" id="UP000002277">
    <property type="component" value="Chromosome 2B"/>
</dbReference>
<dbReference type="Bgee" id="ENSPTRG00000051862">
    <property type="expression patterns" value="Expressed in cortex of kidney and 7 other cell types or tissues"/>
</dbReference>
<dbReference type="GO" id="GO:0030054">
    <property type="term" value="C:cell junction"/>
    <property type="evidence" value="ECO:0007669"/>
    <property type="project" value="Ensembl"/>
</dbReference>
<dbReference type="GO" id="GO:0005654">
    <property type="term" value="C:nucleoplasm"/>
    <property type="evidence" value="ECO:0000318"/>
    <property type="project" value="GO_Central"/>
</dbReference>
<dbReference type="GO" id="GO:0001228">
    <property type="term" value="F:DNA-binding transcription activator activity, RNA polymerase II-specific"/>
    <property type="evidence" value="ECO:0007669"/>
    <property type="project" value="Ensembl"/>
</dbReference>
<dbReference type="GO" id="GO:0000981">
    <property type="term" value="F:DNA-binding transcription factor activity, RNA polymerase II-specific"/>
    <property type="evidence" value="ECO:0000318"/>
    <property type="project" value="GO_Central"/>
</dbReference>
<dbReference type="GO" id="GO:0000978">
    <property type="term" value="F:RNA polymerase II cis-regulatory region sequence-specific DNA binding"/>
    <property type="evidence" value="ECO:0000318"/>
    <property type="project" value="GO_Central"/>
</dbReference>
<dbReference type="GO" id="GO:0009952">
    <property type="term" value="P:anterior/posterior pattern specification"/>
    <property type="evidence" value="ECO:0000318"/>
    <property type="project" value="GO_Central"/>
</dbReference>
<dbReference type="GO" id="GO:0048704">
    <property type="term" value="P:embryonic skeletal system morphogenesis"/>
    <property type="evidence" value="ECO:0000318"/>
    <property type="project" value="GO_Central"/>
</dbReference>
<dbReference type="GO" id="GO:0045944">
    <property type="term" value="P:positive regulation of transcription by RNA polymerase II"/>
    <property type="evidence" value="ECO:0000318"/>
    <property type="project" value="GO_Central"/>
</dbReference>
<dbReference type="GO" id="GO:0048863">
    <property type="term" value="P:stem cell differentiation"/>
    <property type="evidence" value="ECO:0007669"/>
    <property type="project" value="Ensembl"/>
</dbReference>
<dbReference type="CDD" id="cd00086">
    <property type="entry name" value="homeodomain"/>
    <property type="match status" value="1"/>
</dbReference>
<dbReference type="FunFam" id="1.10.10.60:FF:000029">
    <property type="entry name" value="Homeobox protein Hox-D4"/>
    <property type="match status" value="1"/>
</dbReference>
<dbReference type="Gene3D" id="1.10.10.60">
    <property type="entry name" value="Homeodomain-like"/>
    <property type="match status" value="1"/>
</dbReference>
<dbReference type="InterPro" id="IPR050609">
    <property type="entry name" value="Antp_homeobox_Deformed_sf"/>
</dbReference>
<dbReference type="InterPro" id="IPR001356">
    <property type="entry name" value="HD"/>
</dbReference>
<dbReference type="InterPro" id="IPR020479">
    <property type="entry name" value="HD_metazoa"/>
</dbReference>
<dbReference type="InterPro" id="IPR017995">
    <property type="entry name" value="Homeobox_antennapedia"/>
</dbReference>
<dbReference type="InterPro" id="IPR001827">
    <property type="entry name" value="Homeobox_Antennapedia_CS"/>
</dbReference>
<dbReference type="InterPro" id="IPR017970">
    <property type="entry name" value="Homeobox_CS"/>
</dbReference>
<dbReference type="InterPro" id="IPR009057">
    <property type="entry name" value="Homeodomain-like_sf"/>
</dbReference>
<dbReference type="PANTHER" id="PTHR45771:SF5">
    <property type="entry name" value="HOMEOBOX PROTEIN HOX-D4"/>
    <property type="match status" value="1"/>
</dbReference>
<dbReference type="PANTHER" id="PTHR45771">
    <property type="entry name" value="HOMEOTIC PROTEIN DEFORMED"/>
    <property type="match status" value="1"/>
</dbReference>
<dbReference type="Pfam" id="PF00046">
    <property type="entry name" value="Homeodomain"/>
    <property type="match status" value="1"/>
</dbReference>
<dbReference type="PRINTS" id="PR00025">
    <property type="entry name" value="ANTENNAPEDIA"/>
</dbReference>
<dbReference type="PRINTS" id="PR00024">
    <property type="entry name" value="HOMEOBOX"/>
</dbReference>
<dbReference type="SMART" id="SM00389">
    <property type="entry name" value="HOX"/>
    <property type="match status" value="1"/>
</dbReference>
<dbReference type="SUPFAM" id="SSF46689">
    <property type="entry name" value="Homeodomain-like"/>
    <property type="match status" value="1"/>
</dbReference>
<dbReference type="PROSITE" id="PS00032">
    <property type="entry name" value="ANTENNAPEDIA"/>
    <property type="match status" value="1"/>
</dbReference>
<dbReference type="PROSITE" id="PS00027">
    <property type="entry name" value="HOMEOBOX_1"/>
    <property type="match status" value="1"/>
</dbReference>
<dbReference type="PROSITE" id="PS50071">
    <property type="entry name" value="HOMEOBOX_2"/>
    <property type="match status" value="1"/>
</dbReference>
<evidence type="ECO:0000250" key="1"/>
<evidence type="ECO:0000250" key="2">
    <source>
        <dbReference type="UniProtKB" id="P09016"/>
    </source>
</evidence>
<evidence type="ECO:0000255" key="3">
    <source>
        <dbReference type="PROSITE-ProRule" id="PRU00108"/>
    </source>
</evidence>
<evidence type="ECO:0000256" key="4">
    <source>
        <dbReference type="SAM" id="MobiDB-lite"/>
    </source>
</evidence>
<evidence type="ECO:0000305" key="5"/>
<feature type="chain" id="PRO_0000285436" description="Homeobox protein Hox-D4">
    <location>
        <begin position="1"/>
        <end position="255"/>
    </location>
</feature>
<feature type="DNA-binding region" description="Homeobox" evidence="3">
    <location>
        <begin position="154"/>
        <end position="213"/>
    </location>
</feature>
<feature type="region of interest" description="Disordered" evidence="4">
    <location>
        <begin position="31"/>
        <end position="128"/>
    </location>
</feature>
<feature type="region of interest" description="Disordered" evidence="4">
    <location>
        <begin position="212"/>
        <end position="255"/>
    </location>
</feature>
<feature type="short sequence motif" description="Antp-type hexapeptide">
    <location>
        <begin position="133"/>
        <end position="138"/>
    </location>
</feature>
<feature type="compositionally biased region" description="Pro residues" evidence="4">
    <location>
        <begin position="94"/>
        <end position="107"/>
    </location>
</feature>
<feature type="compositionally biased region" description="Low complexity" evidence="4">
    <location>
        <begin position="222"/>
        <end position="234"/>
    </location>
</feature>
<feature type="compositionally biased region" description="Basic and acidic residues" evidence="4">
    <location>
        <begin position="245"/>
        <end position="255"/>
    </location>
</feature>
<gene>
    <name type="primary">HOXD4</name>
</gene>
<sequence>MVMSSYMVNSKYVDPKFPPCEEYLQGGYLGEQGADYYGGGAQGADFQPPGLYPRPDFGEQPFGGSGPGPGSALPARGHGQEPGGPGGHYAAPGEPCPAPPAPPPAPLPGARACSQSDPKQPPPGTALKQPAVVYPWMKKVHVNSVNPNYTGGEPKRSRTAYTRQQVLELEKEFHFNRYLTRRRRIEIAHTLCLSERQIKIWFQNRRMKWKKDHKLPNTKGRSSSSSSSSSCSSSVAPSQHLQPMAKDHHTDLTTL</sequence>
<reference key="1">
    <citation type="submission" date="2006-08" db="EMBL/GenBank/DDBJ databases">
        <title>Positive selection in transcription factor genes on the human lineage.</title>
        <authorList>
            <person name="Nickel G.C."/>
            <person name="Tefft D.L."/>
            <person name="Trevarthen K."/>
            <person name="Funt J."/>
            <person name="Adams M.D."/>
        </authorList>
    </citation>
    <scope>NUCLEOTIDE SEQUENCE [GENOMIC DNA]</scope>
</reference>